<name>OMPA_KLEPN</name>
<keyword id="KW-0002">3D-structure</keyword>
<keyword id="KW-0998">Cell outer membrane</keyword>
<keyword id="KW-0184">Conjugation</keyword>
<keyword id="KW-1015">Disulfide bond</keyword>
<keyword id="KW-0406">Ion transport</keyword>
<keyword id="KW-0472">Membrane</keyword>
<keyword id="KW-0626">Porin</keyword>
<keyword id="KW-0677">Repeat</keyword>
<keyword id="KW-0732">Signal</keyword>
<keyword id="KW-0812">Transmembrane</keyword>
<keyword id="KW-1134">Transmembrane beta strand</keyword>
<keyword id="KW-0813">Transport</keyword>
<feature type="signal peptide" evidence="4">
    <location>
        <begin position="1"/>
        <end status="unknown"/>
    </location>
</feature>
<feature type="chain" id="PRO_0000020097" description="Outer membrane protein A">
    <location>
        <begin status="unknown"/>
        <end position="344"/>
    </location>
</feature>
<feature type="topological domain" description="Periplasmic" evidence="2">
    <location>
        <begin position="1"/>
        <end position="14"/>
    </location>
</feature>
<feature type="transmembrane region" description="Beta stranded" evidence="2">
    <location>
        <begin position="15"/>
        <end position="24"/>
    </location>
</feature>
<feature type="topological domain" description="Extracellular" evidence="2">
    <location>
        <begin position="25"/>
        <end position="49"/>
    </location>
</feature>
<feature type="transmembrane region" description="Beta stranded" evidence="2">
    <location>
        <begin position="50"/>
        <end position="59"/>
    </location>
</feature>
<feature type="topological domain" description="Periplasmic" evidence="2">
    <location>
        <begin position="60"/>
        <end position="62"/>
    </location>
</feature>
<feature type="transmembrane region" description="Beta stranded" evidence="2">
    <location>
        <begin position="63"/>
        <end position="71"/>
    </location>
</feature>
<feature type="topological domain" description="Extracellular" evidence="2">
    <location>
        <begin position="72"/>
        <end position="89"/>
    </location>
</feature>
<feature type="transmembrane region" description="Beta stranded" evidence="2">
    <location>
        <begin position="90"/>
        <end position="100"/>
    </location>
</feature>
<feature type="topological domain" description="Periplasmic" evidence="2">
    <location>
        <begin position="101"/>
        <end position="104"/>
    </location>
</feature>
<feature type="transmembrane region" description="Beta stranded" evidence="2">
    <location>
        <begin position="105"/>
        <end position="114"/>
    </location>
</feature>
<feature type="topological domain" description="Extracellular" evidence="2">
    <location>
        <begin position="115"/>
        <end position="139"/>
    </location>
</feature>
<feature type="transmembrane region" description="Beta stranded" evidence="2">
    <location>
        <begin position="140"/>
        <end position="149"/>
    </location>
</feature>
<feature type="topological domain" description="Periplasmic" evidence="2">
    <location>
        <begin position="150"/>
        <end position="153"/>
    </location>
</feature>
<feature type="transmembrane region" description="Beta stranded" evidence="5">
    <location>
        <begin position="154"/>
        <end position="162"/>
    </location>
</feature>
<feature type="topological domain" description="Extracellular" evidence="5">
    <location>
        <begin position="163"/>
        <end position="179"/>
    </location>
</feature>
<feature type="transmembrane region" description="Beta stranded" evidence="2">
    <location>
        <begin position="180"/>
        <end position="188"/>
    </location>
</feature>
<feature type="topological domain" description="Periplasmic" evidence="2">
    <location>
        <begin position="189"/>
        <end position="344"/>
    </location>
</feature>
<feature type="repeat" description="1">
    <location>
        <begin position="199"/>
        <end position="200"/>
    </location>
</feature>
<feature type="repeat" description="2">
    <location>
        <begin position="201"/>
        <end position="202"/>
    </location>
</feature>
<feature type="repeat" description="3">
    <location>
        <begin position="203"/>
        <end position="204"/>
    </location>
</feature>
<feature type="repeat" description="4">
    <location>
        <begin position="205"/>
        <end position="206"/>
    </location>
</feature>
<feature type="domain" description="OmpA-like" evidence="1">
    <location>
        <begin position="208"/>
        <end position="336"/>
    </location>
</feature>
<feature type="region of interest" description="4 X 2 AA tandem repeats of A-P">
    <location>
        <begin position="199"/>
        <end position="206"/>
    </location>
</feature>
<feature type="site" description="Part of salt bridge gating mechanism" evidence="1">
    <location>
        <position position="66"/>
    </location>
</feature>
<feature type="site" description="Part of salt bridge gating mechanism" evidence="1">
    <location>
        <position position="157"/>
    </location>
</feature>
<feature type="disulfide bond" evidence="1">
    <location>
        <begin position="309"/>
        <end position="321"/>
    </location>
</feature>
<feature type="sequence conflict" description="In Ref. 2; AAA25119." evidence="4" ref="2">
    <original>Y</original>
    <variation>I</variation>
    <location>
        <position position="335"/>
    </location>
</feature>
<feature type="strand" evidence="8">
    <location>
        <begin position="7"/>
        <end position="9"/>
    </location>
</feature>
<feature type="strand" evidence="8">
    <location>
        <begin position="16"/>
        <end position="23"/>
    </location>
</feature>
<feature type="strand" evidence="8">
    <location>
        <begin position="50"/>
        <end position="60"/>
    </location>
</feature>
<feature type="strand" evidence="8">
    <location>
        <begin position="63"/>
        <end position="71"/>
    </location>
</feature>
<feature type="strand" evidence="8">
    <location>
        <begin position="90"/>
        <end position="117"/>
    </location>
</feature>
<feature type="strand" evidence="8">
    <location>
        <begin position="127"/>
        <end position="129"/>
    </location>
</feature>
<feature type="strand" evidence="8">
    <location>
        <begin position="136"/>
        <end position="149"/>
    </location>
</feature>
<feature type="strand" evidence="8">
    <location>
        <begin position="151"/>
        <end position="153"/>
    </location>
</feature>
<feature type="strand" evidence="8">
    <location>
        <begin position="155"/>
        <end position="162"/>
    </location>
</feature>
<feature type="strand" evidence="8">
    <location>
        <begin position="182"/>
        <end position="188"/>
    </location>
</feature>
<feature type="strand" evidence="8">
    <location>
        <begin position="199"/>
        <end position="201"/>
    </location>
</feature>
<feature type="strand" evidence="9">
    <location>
        <begin position="210"/>
        <end position="216"/>
    </location>
</feature>
<feature type="helix" evidence="9">
    <location>
        <begin position="217"/>
        <end position="220"/>
    </location>
</feature>
<feature type="helix" evidence="9">
    <location>
        <begin position="230"/>
        <end position="244"/>
    </location>
</feature>
<feature type="turn" evidence="9">
    <location>
        <begin position="248"/>
        <end position="250"/>
    </location>
</feature>
<feature type="strand" evidence="9">
    <location>
        <begin position="252"/>
        <end position="258"/>
    </location>
</feature>
<feature type="strand" evidence="9">
    <location>
        <begin position="261"/>
        <end position="263"/>
    </location>
</feature>
<feature type="helix" evidence="9">
    <location>
        <begin position="265"/>
        <end position="286"/>
    </location>
</feature>
<feature type="helix" evidence="9">
    <location>
        <begin position="290"/>
        <end position="292"/>
    </location>
</feature>
<feature type="strand" evidence="9">
    <location>
        <begin position="293"/>
        <end position="299"/>
    </location>
</feature>
<feature type="turn" evidence="9">
    <location>
        <begin position="306"/>
        <end position="311"/>
    </location>
</feature>
<feature type="helix" evidence="9">
    <location>
        <begin position="315"/>
        <end position="321"/>
    </location>
</feature>
<feature type="helix" evidence="9">
    <location>
        <begin position="323"/>
        <end position="325"/>
    </location>
</feature>
<feature type="strand" evidence="9">
    <location>
        <begin position="326"/>
        <end position="333"/>
    </location>
</feature>
<sequence>MKAIFVLNAAPKDNTWYAGGKLGWSQYHDTGFYGNGFQNNNGPTRNDQLGAGAFGGYQVNPYLGFEMGYDWLGRMAYKGSVDNGAFKAQGVQLTAKLGYPITDDLDIYTRLGGMVWRADSKGNYASTGVSRSEHDTGVSPVFAGGVEWAVTRDIATRLEYQWVNNIGDAGTVGTRPDNGMLSLGVSYRFGQEDAAPVVAPAPAPAPEVATKHFTLKSDVLFNFNKATLKPEGQQALDQLYTQLSNMDPKDGSAVVLGYTDRIGSEAYNQQLSEKRAQSVVDYLVAKGIPAGKISARGMGESNPVTGNTCDNVKARAALIDCLAPDRRVEIEVKGYKEVVTQPQA</sequence>
<protein>
    <recommendedName>
        <fullName evidence="1">Outer membrane protein A</fullName>
    </recommendedName>
    <alternativeName>
        <fullName evidence="1">Outer membrane porin A</fullName>
    </alternativeName>
    <alternativeName>
        <fullName evidence="3">Outer membrane protein 3A</fullName>
    </alternativeName>
</protein>
<evidence type="ECO:0000255" key="1">
    <source>
        <dbReference type="HAMAP-Rule" id="MF_00842"/>
    </source>
</evidence>
<evidence type="ECO:0000269" key="2">
    <source>
    </source>
</evidence>
<evidence type="ECO:0000303" key="3">
    <source>
    </source>
</evidence>
<evidence type="ECO:0000305" key="4"/>
<evidence type="ECO:0000305" key="5">
    <source>
    </source>
</evidence>
<evidence type="ECO:0007744" key="6">
    <source>
        <dbReference type="PDB" id="2K0L"/>
    </source>
</evidence>
<evidence type="ECO:0007744" key="7">
    <source>
        <dbReference type="PDB" id="5NHX"/>
    </source>
</evidence>
<evidence type="ECO:0007829" key="8">
    <source>
        <dbReference type="PDB" id="2K0L"/>
    </source>
</evidence>
<evidence type="ECO:0007829" key="9">
    <source>
        <dbReference type="PDB" id="5NHX"/>
    </source>
</evidence>
<organism>
    <name type="scientific">Klebsiella pneumoniae</name>
    <dbReference type="NCBI Taxonomy" id="573"/>
    <lineage>
        <taxon>Bacteria</taxon>
        <taxon>Pseudomonadati</taxon>
        <taxon>Pseudomonadota</taxon>
        <taxon>Gammaproteobacteria</taxon>
        <taxon>Enterobacterales</taxon>
        <taxon>Enterobacteriaceae</taxon>
        <taxon>Klebsiella/Raoultella group</taxon>
        <taxon>Klebsiella</taxon>
        <taxon>Klebsiella pneumoniae complex</taxon>
    </lineage>
</organism>
<accession>P24017</accession>
<accession>O69435</accession>
<gene>
    <name evidence="1" type="primary">ompA</name>
</gene>
<reference key="1">
    <citation type="journal article" date="1998" name="Gene">
        <title>Chromosomal sequencing using a PCR-based biotin-capture method allowed isolation of the complete gene for the outer membrane protein A of Klebsiella pneumoniae.</title>
        <authorList>
            <person name="Nguyen T.N."/>
            <person name="Samuelson P."/>
            <person name="Sterky F."/>
            <person name="Merle-Poitte C."/>
            <person name="Robert A."/>
            <person name="Baussant T."/>
            <person name="Haeuw J.F."/>
            <person name="Uhlen M."/>
            <person name="Binz H."/>
            <person name="Stahl S."/>
        </authorList>
    </citation>
    <scope>NUCLEOTIDE SEQUENCE [GENOMIC DNA]</scope>
    <source>
        <strain>RV 308</strain>
    </source>
</reference>
<reference key="2">
    <citation type="journal article" date="1991" name="J. Gen. Microbiol.">
        <title>Molecular and evolutionary relationships among enteric bacteria.</title>
        <authorList>
            <person name="Lawrence J.G."/>
            <person name="Ochman H."/>
            <person name="Hartl D.L."/>
        </authorList>
    </citation>
    <scope>NUCLEOTIDE SEQUENCE [GENOMIC DNA] OF 93-335</scope>
    <source>
        <strain>LD119</strain>
    </source>
</reference>
<reference evidence="6" key="3">
    <citation type="journal article" date="2009" name="J. Mol. Biol.">
        <title>Solution state NMR structure and dynamics of KpOmpA, a 210 residue transmembrane domain possessing a high potential for immunological applications.</title>
        <authorList>
            <person name="Renault M."/>
            <person name="Saurel O."/>
            <person name="Czaplicki J."/>
            <person name="Demange P."/>
            <person name="Gervais V."/>
            <person name="Lohr F."/>
            <person name="Reat V."/>
            <person name="Piotto M."/>
            <person name="Milon A."/>
        </authorList>
    </citation>
    <scope>STRUCTURE BY NMR OF 1-207</scope>
    <scope>SUBCELLULAR LOCATION</scope>
    <scope>TOPOLOGY</scope>
</reference>
<reference evidence="7" key="4">
    <citation type="submission" date="2017-03" db="PDB data bank">
        <title>Structure and dynamics of the C-terminal domain of OmpA from Klebsiella pneumonia.</title>
        <authorList>
            <person name="Nars G."/>
            <person name="Iordanov I."/>
            <person name="Saurel O."/>
            <person name="Tranier S."/>
            <person name="Mourey L."/>
            <person name="Milon A."/>
            <person name="Demange P."/>
        </authorList>
    </citation>
    <scope>X-RAY CRYSTALLOGRAPHY (1.95 ANGSTROMS) OF 209-334</scope>
</reference>
<comment type="function">
    <text evidence="1">With TolR probably plays a role in maintaining the position of the peptidoglycan cell wall in the periplasm. Acts as a porin with low permeability that allows slow penetration of small solutes; an internal gate slows down solute passage.</text>
</comment>
<comment type="function">
    <text evidence="1">Required for conjugation with F-type plasmids; probably serves as the mating receptor on recipient cells.</text>
</comment>
<comment type="subunit">
    <text evidence="1">Monomer and homodimer.</text>
</comment>
<comment type="subcellular location">
    <subcellularLocation>
        <location evidence="1 5">Cell outer membrane</location>
        <topology evidence="1 2">Multi-pass membrane protein</topology>
    </subcellularLocation>
</comment>
<comment type="domain">
    <text evidence="1">The extracellular loops are most variable in sequence, and in some bacteria confer sensitivity to phage and/or colicins.</text>
</comment>
<comment type="similarity">
    <text evidence="1">Belongs to the outer membrane OOP (TC 1.B.6) superfamily. OmpA family.</text>
</comment>
<proteinExistence type="evidence at protein level"/>
<dbReference type="EMBL" id="AJ000998">
    <property type="protein sequence ID" value="CAA04450.1"/>
    <property type="molecule type" value="Genomic_DNA"/>
</dbReference>
<dbReference type="EMBL" id="M63355">
    <property type="protein sequence ID" value="AAA25119.1"/>
    <property type="molecule type" value="Genomic_DNA"/>
</dbReference>
<dbReference type="PDB" id="2K0L">
    <property type="method" value="NMR"/>
    <property type="chains" value="A=1-207"/>
</dbReference>
<dbReference type="PDB" id="5NHX">
    <property type="method" value="X-ray"/>
    <property type="resolution" value="1.95 A"/>
    <property type="chains" value="A=209-334"/>
</dbReference>
<dbReference type="PDBsum" id="2K0L"/>
<dbReference type="PDBsum" id="5NHX"/>
<dbReference type="BMRB" id="P24017"/>
<dbReference type="SMR" id="P24017"/>
<dbReference type="TCDB" id="1.B.6.1.11">
    <property type="family name" value="the ompa-ompf porin (oop) family"/>
</dbReference>
<dbReference type="EvolutionaryTrace" id="P24017"/>
<dbReference type="GO" id="GO:0009279">
    <property type="term" value="C:cell outer membrane"/>
    <property type="evidence" value="ECO:0007669"/>
    <property type="project" value="UniProtKB-SubCell"/>
</dbReference>
<dbReference type="GO" id="GO:0046930">
    <property type="term" value="C:pore complex"/>
    <property type="evidence" value="ECO:0007669"/>
    <property type="project" value="UniProtKB-KW"/>
</dbReference>
<dbReference type="GO" id="GO:0015288">
    <property type="term" value="F:porin activity"/>
    <property type="evidence" value="ECO:0007669"/>
    <property type="project" value="UniProtKB-UniRule"/>
</dbReference>
<dbReference type="GO" id="GO:0034220">
    <property type="term" value="P:monoatomic ion transmembrane transport"/>
    <property type="evidence" value="ECO:0007669"/>
    <property type="project" value="UniProtKB-UniRule"/>
</dbReference>
<dbReference type="GO" id="GO:0039722">
    <property type="term" value="P:symbiont-mediated suppression of host toll-like receptor signaling pathway"/>
    <property type="evidence" value="ECO:0000269"/>
    <property type="project" value="SigSci"/>
</dbReference>
<dbReference type="CDD" id="cd07185">
    <property type="entry name" value="OmpA_C-like"/>
    <property type="match status" value="1"/>
</dbReference>
<dbReference type="FunFam" id="3.30.1330.60:FF:000004">
    <property type="entry name" value="Outer membrane protein A"/>
    <property type="match status" value="1"/>
</dbReference>
<dbReference type="Gene3D" id="2.40.160.20">
    <property type="match status" value="1"/>
</dbReference>
<dbReference type="Gene3D" id="3.30.1330.60">
    <property type="entry name" value="OmpA-like domain"/>
    <property type="match status" value="1"/>
</dbReference>
<dbReference type="HAMAP" id="MF_00842">
    <property type="entry name" value="OmpA"/>
    <property type="match status" value="1"/>
</dbReference>
<dbReference type="InterPro" id="IPR050330">
    <property type="entry name" value="Bact_OuterMem_StrucFunc"/>
</dbReference>
<dbReference type="InterPro" id="IPR011250">
    <property type="entry name" value="OMP/PagP_b-brl"/>
</dbReference>
<dbReference type="InterPro" id="IPR006664">
    <property type="entry name" value="OMP_bac"/>
</dbReference>
<dbReference type="InterPro" id="IPR002368">
    <property type="entry name" value="OmpA"/>
</dbReference>
<dbReference type="InterPro" id="IPR006665">
    <property type="entry name" value="OmpA-like"/>
</dbReference>
<dbReference type="InterPro" id="IPR006690">
    <property type="entry name" value="OMPA-like_CS"/>
</dbReference>
<dbReference type="InterPro" id="IPR036737">
    <property type="entry name" value="OmpA-like_sf"/>
</dbReference>
<dbReference type="InterPro" id="IPR000498">
    <property type="entry name" value="OmpA-like_TM_dom"/>
</dbReference>
<dbReference type="NCBIfam" id="NF008071">
    <property type="entry name" value="PRK10808.1"/>
    <property type="match status" value="1"/>
</dbReference>
<dbReference type="PANTHER" id="PTHR30329:SF21">
    <property type="entry name" value="LIPOPROTEIN YIAD-RELATED"/>
    <property type="match status" value="1"/>
</dbReference>
<dbReference type="PANTHER" id="PTHR30329">
    <property type="entry name" value="STATOR ELEMENT OF FLAGELLAR MOTOR COMPLEX"/>
    <property type="match status" value="1"/>
</dbReference>
<dbReference type="Pfam" id="PF00691">
    <property type="entry name" value="OmpA"/>
    <property type="match status" value="1"/>
</dbReference>
<dbReference type="Pfam" id="PF01389">
    <property type="entry name" value="OmpA_membrane"/>
    <property type="match status" value="1"/>
</dbReference>
<dbReference type="PRINTS" id="PR01021">
    <property type="entry name" value="OMPADOMAIN"/>
</dbReference>
<dbReference type="PRINTS" id="PR01022">
    <property type="entry name" value="OUTRMMBRANEA"/>
</dbReference>
<dbReference type="SUPFAM" id="SSF56925">
    <property type="entry name" value="OMPA-like"/>
    <property type="match status" value="1"/>
</dbReference>
<dbReference type="SUPFAM" id="SSF103088">
    <property type="entry name" value="OmpA-like"/>
    <property type="match status" value="1"/>
</dbReference>
<dbReference type="PROSITE" id="PS01068">
    <property type="entry name" value="OMPA_1"/>
    <property type="match status" value="1"/>
</dbReference>
<dbReference type="PROSITE" id="PS51123">
    <property type="entry name" value="OMPA_2"/>
    <property type="match status" value="1"/>
</dbReference>